<dbReference type="EC" id="3.6.1.41" evidence="1"/>
<dbReference type="EMBL" id="CP001164">
    <property type="protein sequence ID" value="ACI37830.1"/>
    <property type="molecule type" value="Genomic_DNA"/>
</dbReference>
<dbReference type="RefSeq" id="WP_000257187.1">
    <property type="nucleotide sequence ID" value="NC_011353.1"/>
</dbReference>
<dbReference type="SMR" id="B5YZ87"/>
<dbReference type="KEGG" id="ecf:ECH74115_0054"/>
<dbReference type="HOGENOM" id="CLU_056184_2_0_6"/>
<dbReference type="GO" id="GO:0008803">
    <property type="term" value="F:bis(5'-nucleosyl)-tetraphosphatase (symmetrical) activity"/>
    <property type="evidence" value="ECO:0007669"/>
    <property type="project" value="UniProtKB-UniRule"/>
</dbReference>
<dbReference type="CDD" id="cd07422">
    <property type="entry name" value="MPP_ApaH"/>
    <property type="match status" value="1"/>
</dbReference>
<dbReference type="FunFam" id="3.60.21.10:FF:000013">
    <property type="entry name" value="Bis(5'-nucleosyl)-tetraphosphatase, symmetrical"/>
    <property type="match status" value="1"/>
</dbReference>
<dbReference type="Gene3D" id="3.60.21.10">
    <property type="match status" value="1"/>
</dbReference>
<dbReference type="HAMAP" id="MF_00199">
    <property type="entry name" value="ApaH"/>
    <property type="match status" value="1"/>
</dbReference>
<dbReference type="InterPro" id="IPR004617">
    <property type="entry name" value="ApaH"/>
</dbReference>
<dbReference type="InterPro" id="IPR004843">
    <property type="entry name" value="Calcineurin-like_PHP_ApaH"/>
</dbReference>
<dbReference type="InterPro" id="IPR029052">
    <property type="entry name" value="Metallo-depent_PP-like"/>
</dbReference>
<dbReference type="NCBIfam" id="TIGR00668">
    <property type="entry name" value="apaH"/>
    <property type="match status" value="1"/>
</dbReference>
<dbReference type="NCBIfam" id="NF001204">
    <property type="entry name" value="PRK00166.1"/>
    <property type="match status" value="1"/>
</dbReference>
<dbReference type="PANTHER" id="PTHR40942">
    <property type="match status" value="1"/>
</dbReference>
<dbReference type="PANTHER" id="PTHR40942:SF4">
    <property type="entry name" value="CYTOCHROME C5"/>
    <property type="match status" value="1"/>
</dbReference>
<dbReference type="Pfam" id="PF00149">
    <property type="entry name" value="Metallophos"/>
    <property type="match status" value="1"/>
</dbReference>
<dbReference type="PIRSF" id="PIRSF000903">
    <property type="entry name" value="B5n-ttraPtase_sm"/>
    <property type="match status" value="1"/>
</dbReference>
<dbReference type="SUPFAM" id="SSF56300">
    <property type="entry name" value="Metallo-dependent phosphatases"/>
    <property type="match status" value="1"/>
</dbReference>
<gene>
    <name evidence="1" type="primary">apaH</name>
    <name type="ordered locus">ECH74115_0054</name>
</gene>
<accession>B5YZ87</accession>
<keyword id="KW-0378">Hydrolase</keyword>
<comment type="function">
    <text evidence="1">Hydrolyzes diadenosine 5',5'''-P1,P4-tetraphosphate to yield ADP.</text>
</comment>
<comment type="catalytic activity">
    <reaction evidence="1">
        <text>P(1),P(4)-bis(5'-adenosyl) tetraphosphate + H2O = 2 ADP + 2 H(+)</text>
        <dbReference type="Rhea" id="RHEA:24252"/>
        <dbReference type="ChEBI" id="CHEBI:15377"/>
        <dbReference type="ChEBI" id="CHEBI:15378"/>
        <dbReference type="ChEBI" id="CHEBI:58141"/>
        <dbReference type="ChEBI" id="CHEBI:456216"/>
        <dbReference type="EC" id="3.6.1.41"/>
    </reaction>
</comment>
<comment type="similarity">
    <text evidence="1">Belongs to the Ap4A hydrolase family.</text>
</comment>
<feature type="chain" id="PRO_1000099322" description="Bis(5'-nucleosyl)-tetraphosphatase, symmetrical">
    <location>
        <begin position="1"/>
        <end position="282"/>
    </location>
</feature>
<protein>
    <recommendedName>
        <fullName evidence="1">Bis(5'-nucleosyl)-tetraphosphatase, symmetrical</fullName>
        <ecNumber evidence="1">3.6.1.41</ecNumber>
    </recommendedName>
    <alternativeName>
        <fullName evidence="1">Ap4A hydrolase</fullName>
    </alternativeName>
    <alternativeName>
        <fullName evidence="1">Diadenosine 5',5'''-P1,P4-tetraphosphate pyrophosphohydrolase</fullName>
    </alternativeName>
    <alternativeName>
        <fullName evidence="1">Diadenosine tetraphosphatase</fullName>
    </alternativeName>
</protein>
<evidence type="ECO:0000255" key="1">
    <source>
        <dbReference type="HAMAP-Rule" id="MF_00199"/>
    </source>
</evidence>
<proteinExistence type="inferred from homology"/>
<name>APAH_ECO5E</name>
<organism>
    <name type="scientific">Escherichia coli O157:H7 (strain EC4115 / EHEC)</name>
    <dbReference type="NCBI Taxonomy" id="444450"/>
    <lineage>
        <taxon>Bacteria</taxon>
        <taxon>Pseudomonadati</taxon>
        <taxon>Pseudomonadota</taxon>
        <taxon>Gammaproteobacteria</taxon>
        <taxon>Enterobacterales</taxon>
        <taxon>Enterobacteriaceae</taxon>
        <taxon>Escherichia</taxon>
    </lineage>
</organism>
<reference key="1">
    <citation type="journal article" date="2011" name="Proc. Natl. Acad. Sci. U.S.A.">
        <title>Genomic anatomy of Escherichia coli O157:H7 outbreaks.</title>
        <authorList>
            <person name="Eppinger M."/>
            <person name="Mammel M.K."/>
            <person name="Leclerc J.E."/>
            <person name="Ravel J."/>
            <person name="Cebula T.A."/>
        </authorList>
    </citation>
    <scope>NUCLEOTIDE SEQUENCE [LARGE SCALE GENOMIC DNA]</scope>
    <source>
        <strain>EC4115 / EHEC</strain>
    </source>
</reference>
<sequence length="282" mass="31497">MATYLIGDVHGCYDELIALLHKVEFTPGKDTLWLTGDLVARGPGSLDVLRYVKSLGDSVRLVLGNHDLHLLAVFAGISRNKPKDRLTPLLEAPDADELLNWLRRQPLLQIDEEKKLVMAHAGITPQWDLQTAKECARDVEAVLSSDSYPFFLDAMYGDMPNNWSPELRGLGRLRFITNAFTRMRFCFPNGQLDMYSKESPEEAPAPLKPWFAIPGPVAEEYSIAFGHWASLEGKGTPEGIYALDTGCCWGGSLTCLRWEDKQYFVQPSNRHKDLGEGEAVAS</sequence>